<organism>
    <name type="scientific">Hyphomonas neptunium (strain ATCC 15444)</name>
    <dbReference type="NCBI Taxonomy" id="228405"/>
    <lineage>
        <taxon>Bacteria</taxon>
        <taxon>Pseudomonadati</taxon>
        <taxon>Pseudomonadota</taxon>
        <taxon>Alphaproteobacteria</taxon>
        <taxon>Hyphomonadales</taxon>
        <taxon>Hyphomonadaceae</taxon>
        <taxon>Hyphomonas</taxon>
    </lineage>
</organism>
<protein>
    <recommendedName>
        <fullName evidence="1">Leucine--tRNA ligase</fullName>
        <ecNumber evidence="1">6.1.1.4</ecNumber>
    </recommendedName>
    <alternativeName>
        <fullName evidence="1">Leucyl-tRNA synthetase</fullName>
        <shortName evidence="1">LeuRS</shortName>
    </alternativeName>
</protein>
<proteinExistence type="inferred from homology"/>
<name>SYL_HYPNA</name>
<gene>
    <name evidence="1" type="primary">leuS</name>
    <name type="ordered locus">HNE_3557</name>
</gene>
<dbReference type="EC" id="6.1.1.4" evidence="1"/>
<dbReference type="EMBL" id="CP000158">
    <property type="protein sequence ID" value="ABI77585.1"/>
    <property type="molecule type" value="Genomic_DNA"/>
</dbReference>
<dbReference type="RefSeq" id="WP_011648522.1">
    <property type="nucleotide sequence ID" value="NC_008358.1"/>
</dbReference>
<dbReference type="SMR" id="Q0BWB5"/>
<dbReference type="STRING" id="228405.HNE_3557"/>
<dbReference type="KEGG" id="hne:HNE_3557"/>
<dbReference type="eggNOG" id="COG0495">
    <property type="taxonomic scope" value="Bacteria"/>
</dbReference>
<dbReference type="HOGENOM" id="CLU_004427_0_0_5"/>
<dbReference type="Proteomes" id="UP000001959">
    <property type="component" value="Chromosome"/>
</dbReference>
<dbReference type="GO" id="GO:0005829">
    <property type="term" value="C:cytosol"/>
    <property type="evidence" value="ECO:0007669"/>
    <property type="project" value="TreeGrafter"/>
</dbReference>
<dbReference type="GO" id="GO:0002161">
    <property type="term" value="F:aminoacyl-tRNA deacylase activity"/>
    <property type="evidence" value="ECO:0007669"/>
    <property type="project" value="InterPro"/>
</dbReference>
<dbReference type="GO" id="GO:0005524">
    <property type="term" value="F:ATP binding"/>
    <property type="evidence" value="ECO:0007669"/>
    <property type="project" value="UniProtKB-UniRule"/>
</dbReference>
<dbReference type="GO" id="GO:0004823">
    <property type="term" value="F:leucine-tRNA ligase activity"/>
    <property type="evidence" value="ECO:0007669"/>
    <property type="project" value="UniProtKB-UniRule"/>
</dbReference>
<dbReference type="GO" id="GO:0006429">
    <property type="term" value="P:leucyl-tRNA aminoacylation"/>
    <property type="evidence" value="ECO:0007669"/>
    <property type="project" value="UniProtKB-UniRule"/>
</dbReference>
<dbReference type="CDD" id="cd07958">
    <property type="entry name" value="Anticodon_Ia_Leu_BEm"/>
    <property type="match status" value="1"/>
</dbReference>
<dbReference type="CDD" id="cd00812">
    <property type="entry name" value="LeuRS_core"/>
    <property type="match status" value="1"/>
</dbReference>
<dbReference type="FunFam" id="1.10.730.10:FF:000002">
    <property type="entry name" value="Leucine--tRNA ligase"/>
    <property type="match status" value="1"/>
</dbReference>
<dbReference type="FunFam" id="3.10.20.590:FF:000001">
    <property type="entry name" value="Leucine--tRNA ligase"/>
    <property type="match status" value="1"/>
</dbReference>
<dbReference type="FunFam" id="3.40.50.620:FF:000003">
    <property type="entry name" value="Leucine--tRNA ligase"/>
    <property type="match status" value="1"/>
</dbReference>
<dbReference type="Gene3D" id="2.20.28.290">
    <property type="match status" value="1"/>
</dbReference>
<dbReference type="Gene3D" id="3.10.20.590">
    <property type="match status" value="1"/>
</dbReference>
<dbReference type="Gene3D" id="3.40.50.620">
    <property type="entry name" value="HUPs"/>
    <property type="match status" value="2"/>
</dbReference>
<dbReference type="Gene3D" id="1.10.730.10">
    <property type="entry name" value="Isoleucyl-tRNA Synthetase, Domain 1"/>
    <property type="match status" value="1"/>
</dbReference>
<dbReference type="HAMAP" id="MF_00049_B">
    <property type="entry name" value="Leu_tRNA_synth_B"/>
    <property type="match status" value="1"/>
</dbReference>
<dbReference type="InterPro" id="IPR001412">
    <property type="entry name" value="aa-tRNA-synth_I_CS"/>
</dbReference>
<dbReference type="InterPro" id="IPR002300">
    <property type="entry name" value="aa-tRNA-synth_Ia"/>
</dbReference>
<dbReference type="InterPro" id="IPR002302">
    <property type="entry name" value="Leu-tRNA-ligase"/>
</dbReference>
<dbReference type="InterPro" id="IPR025709">
    <property type="entry name" value="Leu_tRNA-synth_edit"/>
</dbReference>
<dbReference type="InterPro" id="IPR013155">
    <property type="entry name" value="M/V/L/I-tRNA-synth_anticd-bd"/>
</dbReference>
<dbReference type="InterPro" id="IPR015413">
    <property type="entry name" value="Methionyl/Leucyl_tRNA_Synth"/>
</dbReference>
<dbReference type="InterPro" id="IPR014729">
    <property type="entry name" value="Rossmann-like_a/b/a_fold"/>
</dbReference>
<dbReference type="InterPro" id="IPR009080">
    <property type="entry name" value="tRNAsynth_Ia_anticodon-bd"/>
</dbReference>
<dbReference type="InterPro" id="IPR009008">
    <property type="entry name" value="Val/Leu/Ile-tRNA-synth_edit"/>
</dbReference>
<dbReference type="NCBIfam" id="TIGR00396">
    <property type="entry name" value="leuS_bact"/>
    <property type="match status" value="1"/>
</dbReference>
<dbReference type="PANTHER" id="PTHR43740:SF2">
    <property type="entry name" value="LEUCINE--TRNA LIGASE, MITOCHONDRIAL"/>
    <property type="match status" value="1"/>
</dbReference>
<dbReference type="PANTHER" id="PTHR43740">
    <property type="entry name" value="LEUCYL-TRNA SYNTHETASE"/>
    <property type="match status" value="1"/>
</dbReference>
<dbReference type="Pfam" id="PF08264">
    <property type="entry name" value="Anticodon_1"/>
    <property type="match status" value="1"/>
</dbReference>
<dbReference type="Pfam" id="PF00133">
    <property type="entry name" value="tRNA-synt_1"/>
    <property type="match status" value="2"/>
</dbReference>
<dbReference type="Pfam" id="PF13603">
    <property type="entry name" value="tRNA-synt_1_2"/>
    <property type="match status" value="1"/>
</dbReference>
<dbReference type="Pfam" id="PF09334">
    <property type="entry name" value="tRNA-synt_1g"/>
    <property type="match status" value="1"/>
</dbReference>
<dbReference type="PRINTS" id="PR00985">
    <property type="entry name" value="TRNASYNTHLEU"/>
</dbReference>
<dbReference type="SUPFAM" id="SSF47323">
    <property type="entry name" value="Anticodon-binding domain of a subclass of class I aminoacyl-tRNA synthetases"/>
    <property type="match status" value="1"/>
</dbReference>
<dbReference type="SUPFAM" id="SSF52374">
    <property type="entry name" value="Nucleotidylyl transferase"/>
    <property type="match status" value="1"/>
</dbReference>
<dbReference type="SUPFAM" id="SSF50677">
    <property type="entry name" value="ValRS/IleRS/LeuRS editing domain"/>
    <property type="match status" value="1"/>
</dbReference>
<dbReference type="PROSITE" id="PS00178">
    <property type="entry name" value="AA_TRNA_LIGASE_I"/>
    <property type="match status" value="1"/>
</dbReference>
<evidence type="ECO:0000255" key="1">
    <source>
        <dbReference type="HAMAP-Rule" id="MF_00049"/>
    </source>
</evidence>
<accession>Q0BWB5</accession>
<reference key="1">
    <citation type="journal article" date="2006" name="J. Bacteriol.">
        <title>Comparative genomic evidence for a close relationship between the dimorphic prosthecate bacteria Hyphomonas neptunium and Caulobacter crescentus.</title>
        <authorList>
            <person name="Badger J.H."/>
            <person name="Hoover T.R."/>
            <person name="Brun Y.V."/>
            <person name="Weiner R.M."/>
            <person name="Laub M.T."/>
            <person name="Alexandre G."/>
            <person name="Mrazek J."/>
            <person name="Ren Q."/>
            <person name="Paulsen I.T."/>
            <person name="Nelson K.E."/>
            <person name="Khouri H.M."/>
            <person name="Radune D."/>
            <person name="Sosa J."/>
            <person name="Dodson R.J."/>
            <person name="Sullivan S.A."/>
            <person name="Rosovitz M.J."/>
            <person name="Madupu R."/>
            <person name="Brinkac L.M."/>
            <person name="Durkin A.S."/>
            <person name="Daugherty S.C."/>
            <person name="Kothari S.P."/>
            <person name="Giglio M.G."/>
            <person name="Zhou L."/>
            <person name="Haft D.H."/>
            <person name="Selengut J.D."/>
            <person name="Davidsen T.M."/>
            <person name="Yang Q."/>
            <person name="Zafar N."/>
            <person name="Ward N.L."/>
        </authorList>
    </citation>
    <scope>NUCLEOTIDE SEQUENCE [LARGE SCALE GENOMIC DNA]</scope>
    <source>
        <strain>ATCC 15444</strain>
    </source>
</reference>
<comment type="catalytic activity">
    <reaction evidence="1">
        <text>tRNA(Leu) + L-leucine + ATP = L-leucyl-tRNA(Leu) + AMP + diphosphate</text>
        <dbReference type="Rhea" id="RHEA:11688"/>
        <dbReference type="Rhea" id="RHEA-COMP:9613"/>
        <dbReference type="Rhea" id="RHEA-COMP:9622"/>
        <dbReference type="ChEBI" id="CHEBI:30616"/>
        <dbReference type="ChEBI" id="CHEBI:33019"/>
        <dbReference type="ChEBI" id="CHEBI:57427"/>
        <dbReference type="ChEBI" id="CHEBI:78442"/>
        <dbReference type="ChEBI" id="CHEBI:78494"/>
        <dbReference type="ChEBI" id="CHEBI:456215"/>
        <dbReference type="EC" id="6.1.1.4"/>
    </reaction>
</comment>
<comment type="subcellular location">
    <subcellularLocation>
        <location evidence="1">Cytoplasm</location>
    </subcellularLocation>
</comment>
<comment type="similarity">
    <text evidence="1">Belongs to the class-I aminoacyl-tRNA synthetase family.</text>
</comment>
<sequence>MATRYDPQSAEPRWRDAWEKADIFRTKAPKDAPGAPKAFVLEMFPYPSGRLHMGHVRNYAMGDVVARHKRAKGYNVLHPMGWDAFGMPAENAAMERKVHPGKWTYANIESMKAQFRKLGLSLDWSREFATCDPDYYGAQQALFLKLMDKGLVYRKASKVNWDPVDNTVLANEQVIDGRGWRSGAPVEQRELTQWFFKITAYADDLLEAVQKLERWPEKVRTMQANWIGRSEGLEMTFAFDGERPAGFEDGISVFTTRPDTLFGASFVALSPDHPLTLQLAEKSDALQAFRAKCAQIGTSEEAIEKAEKLGFDTGLTVAHPFEPGRTVPVWVANFVLMGYGTGAIFGCPAHDQRDLDFARKFGLDVFPVVLPPGADAAAFEVGIEAYTGPGHIYKSGFLDGLSIDDAKRAAIAKIEAAGQGEGKVNYRLRDWGVSRQRYWGCPIPVVHCEDCGVVGVPAADLPVRLPEDVTFDVPGNPLDRHPDWKHVDCPKCGKPARRETDTLDTFVDSSWYYARFASVSDPEERAYWLPVDQYIGGVEHAVLHLLYSRFFSRAMRDVGELDLPSGEPFAGLFTQGMVTHETYRSEGGTWLEPSAVERKDGQVFEIATGKPVKVGAIEKMSKSKKNTVDPDAIVATYGADVARWFVLSDSPPERDVEWTQSGAEGAARFVQRVWSFVDSLPETGPFPAPGSDDVSTALRKSNHKAVAAIDRAIEEFRFNSAIATIHEWVNALKKTESDPATLGARAEGADMLARCLVPFMPHLAEACWERLGQTSLVSQAMWPKIDASLVVDDTVTLAVQVNGKRRAEITVAKDMAPDAVEAAAKALPDVASFIAGKSVKKTIVVPGRIVNIVVA</sequence>
<feature type="chain" id="PRO_0000334764" description="Leucine--tRNA ligase">
    <location>
        <begin position="1"/>
        <end position="855"/>
    </location>
</feature>
<feature type="short sequence motif" description="'HIGH' region">
    <location>
        <begin position="45"/>
        <end position="55"/>
    </location>
</feature>
<feature type="short sequence motif" description="'KMSKS' region">
    <location>
        <begin position="619"/>
        <end position="623"/>
    </location>
</feature>
<feature type="binding site" evidence="1">
    <location>
        <position position="622"/>
    </location>
    <ligand>
        <name>ATP</name>
        <dbReference type="ChEBI" id="CHEBI:30616"/>
    </ligand>
</feature>
<keyword id="KW-0030">Aminoacyl-tRNA synthetase</keyword>
<keyword id="KW-0067">ATP-binding</keyword>
<keyword id="KW-0963">Cytoplasm</keyword>
<keyword id="KW-0436">Ligase</keyword>
<keyword id="KW-0547">Nucleotide-binding</keyword>
<keyword id="KW-0648">Protein biosynthesis</keyword>
<keyword id="KW-1185">Reference proteome</keyword>